<reference key="1">
    <citation type="journal article" date="2006" name="Proc. Natl. Acad. Sci. U.S.A.">
        <title>The complete genome of Rhodococcus sp. RHA1 provides insights into a catabolic powerhouse.</title>
        <authorList>
            <person name="McLeod M.P."/>
            <person name="Warren R.L."/>
            <person name="Hsiao W.W.L."/>
            <person name="Araki N."/>
            <person name="Myhre M."/>
            <person name="Fernandes C."/>
            <person name="Miyazawa D."/>
            <person name="Wong W."/>
            <person name="Lillquist A.L."/>
            <person name="Wang D."/>
            <person name="Dosanjh M."/>
            <person name="Hara H."/>
            <person name="Petrescu A."/>
            <person name="Morin R.D."/>
            <person name="Yang G."/>
            <person name="Stott J.M."/>
            <person name="Schein J.E."/>
            <person name="Shin H."/>
            <person name="Smailus D."/>
            <person name="Siddiqui A.S."/>
            <person name="Marra M.A."/>
            <person name="Jones S.J.M."/>
            <person name="Holt R."/>
            <person name="Brinkman F.S.L."/>
            <person name="Miyauchi K."/>
            <person name="Fukuda M."/>
            <person name="Davies J.E."/>
            <person name="Mohn W.W."/>
            <person name="Eltis L.D."/>
        </authorList>
    </citation>
    <scope>NUCLEOTIDE SEQUENCE [LARGE SCALE GENOMIC DNA]</scope>
    <source>
        <strain>RHA1</strain>
    </source>
</reference>
<reference key="2">
    <citation type="journal article" date="2015" name="Appl. Environ. Microbiol.">
        <title>Gamma-Resorcylate catabolic-pathway genes in the soil actinomycete Rhodococcus jostii RHA1.</title>
        <authorList>
            <person name="Kasai D."/>
            <person name="Araki N."/>
            <person name="Motoi K."/>
            <person name="Yoshikawa S."/>
            <person name="Iino T."/>
            <person name="Imai S."/>
            <person name="Masai E."/>
            <person name="Fukuda M."/>
        </authorList>
    </citation>
    <scope>FUNCTION</scope>
    <scope>CATALYTIC ACTIVITY</scope>
    <scope>INDUCTION</scope>
    <scope>DISRUPTION PHENOTYPE</scope>
    <source>
        <strain>RHA1</strain>
    </source>
</reference>
<organism>
    <name type="scientific">Rhodococcus jostii (strain RHA1)</name>
    <dbReference type="NCBI Taxonomy" id="101510"/>
    <lineage>
        <taxon>Bacteria</taxon>
        <taxon>Bacillati</taxon>
        <taxon>Actinomycetota</taxon>
        <taxon>Actinomycetes</taxon>
        <taxon>Mycobacteriales</taxon>
        <taxon>Nocardiaceae</taxon>
        <taxon>Rhodococcus</taxon>
    </lineage>
</organism>
<proteinExistence type="evidence at protein level"/>
<evidence type="ECO:0000250" key="1">
    <source>
        <dbReference type="UniProtKB" id="Q60GU1"/>
    </source>
</evidence>
<evidence type="ECO:0000269" key="2">
    <source>
    </source>
</evidence>
<evidence type="ECO:0000303" key="3">
    <source>
    </source>
</evidence>
<evidence type="ECO:0000305" key="4"/>
<evidence type="ECO:0000312" key="5">
    <source>
        <dbReference type="EMBL" id="ABG93670.1"/>
    </source>
</evidence>
<dbReference type="EC" id="4.1.1.103" evidence="2"/>
<dbReference type="EMBL" id="CP000431">
    <property type="protein sequence ID" value="ABG93670.1"/>
    <property type="molecule type" value="Genomic_DNA"/>
</dbReference>
<dbReference type="RefSeq" id="WP_011594776.1">
    <property type="nucleotide sequence ID" value="NC_008268.1"/>
</dbReference>
<dbReference type="SMR" id="Q0SFL6"/>
<dbReference type="KEGG" id="rha:RHA1_ro01859"/>
<dbReference type="PATRIC" id="fig|101510.16.peg.1880"/>
<dbReference type="eggNOG" id="COG2159">
    <property type="taxonomic scope" value="Bacteria"/>
</dbReference>
<dbReference type="HOGENOM" id="CLU_039329_5_0_11"/>
<dbReference type="OrthoDB" id="8673173at2"/>
<dbReference type="BioCyc" id="MetaCyc:MONOMER-19795"/>
<dbReference type="Proteomes" id="UP000008710">
    <property type="component" value="Chromosome"/>
</dbReference>
<dbReference type="GO" id="GO:0005829">
    <property type="term" value="C:cytosol"/>
    <property type="evidence" value="ECO:0007669"/>
    <property type="project" value="TreeGrafter"/>
</dbReference>
<dbReference type="GO" id="GO:0016831">
    <property type="term" value="F:carboxy-lyase activity"/>
    <property type="evidence" value="ECO:0007669"/>
    <property type="project" value="UniProtKB-KW"/>
</dbReference>
<dbReference type="GO" id="GO:0016787">
    <property type="term" value="F:hydrolase activity"/>
    <property type="evidence" value="ECO:0007669"/>
    <property type="project" value="InterPro"/>
</dbReference>
<dbReference type="GO" id="GO:0046872">
    <property type="term" value="F:metal ion binding"/>
    <property type="evidence" value="ECO:0007669"/>
    <property type="project" value="UniProtKB-KW"/>
</dbReference>
<dbReference type="GO" id="GO:0019748">
    <property type="term" value="P:secondary metabolic process"/>
    <property type="evidence" value="ECO:0007669"/>
    <property type="project" value="TreeGrafter"/>
</dbReference>
<dbReference type="Gene3D" id="3.20.20.140">
    <property type="entry name" value="Metal-dependent hydrolases"/>
    <property type="match status" value="1"/>
</dbReference>
<dbReference type="InterPro" id="IPR032465">
    <property type="entry name" value="ACMSD"/>
</dbReference>
<dbReference type="InterPro" id="IPR006680">
    <property type="entry name" value="Amidohydro-rel"/>
</dbReference>
<dbReference type="InterPro" id="IPR032466">
    <property type="entry name" value="Metal_Hydrolase"/>
</dbReference>
<dbReference type="PANTHER" id="PTHR21240">
    <property type="entry name" value="2-AMINO-3-CARBOXYLMUCONATE-6-SEMIALDEHYDE DECARBOXYLASE"/>
    <property type="match status" value="1"/>
</dbReference>
<dbReference type="PANTHER" id="PTHR21240:SF30">
    <property type="entry name" value="AMIDOHYDROLASE-RELATED DOMAIN-CONTAINING PROTEIN-RELATED"/>
    <property type="match status" value="1"/>
</dbReference>
<dbReference type="Pfam" id="PF04909">
    <property type="entry name" value="Amidohydro_2"/>
    <property type="match status" value="1"/>
</dbReference>
<dbReference type="SUPFAM" id="SSF51556">
    <property type="entry name" value="Metallo-dependent hydrolases"/>
    <property type="match status" value="1"/>
</dbReference>
<keyword id="KW-0210">Decarboxylase</keyword>
<keyword id="KW-0456">Lyase</keyword>
<keyword id="KW-0479">Metal-binding</keyword>
<keyword id="KW-0862">Zinc</keyword>
<feature type="chain" id="PRO_0000454505" description="Gamma-resorcylate decarboxylase">
    <location>
        <begin position="1"/>
        <end position="329"/>
    </location>
</feature>
<feature type="active site" evidence="1">
    <location>
        <position position="290"/>
    </location>
</feature>
<feature type="binding site" evidence="1">
    <location>
        <position position="8"/>
    </location>
    <ligand>
        <name>Zn(2+)</name>
        <dbReference type="ChEBI" id="CHEBI:29105"/>
    </ligand>
</feature>
<feature type="binding site" evidence="1">
    <location>
        <position position="10"/>
    </location>
    <ligand>
        <name>Zn(2+)</name>
        <dbReference type="ChEBI" id="CHEBI:29105"/>
    </ligand>
</feature>
<feature type="binding site" evidence="1">
    <location>
        <position position="167"/>
    </location>
    <ligand>
        <name>Zn(2+)</name>
        <dbReference type="ChEBI" id="CHEBI:29105"/>
    </ligand>
</feature>
<feature type="binding site" evidence="1">
    <location>
        <position position="290"/>
    </location>
    <ligand>
        <name>Zn(2+)</name>
        <dbReference type="ChEBI" id="CHEBI:29105"/>
    </ligand>
</feature>
<accession>Q0SFL6</accession>
<gene>
    <name evidence="3" type="primary">tsdA</name>
    <name evidence="5" type="ordered locus">RHA1_ro01859</name>
</gene>
<sequence>MQGKIALEEHFAIPETLNDSAGFVPGTYWDELQARLLDIQDVRLKLMDEHNIETMILSLNAPAVQAIPERERAIDIARRANDVLAEECAKRPDRFRGFAALPLQDPDAAAEELRRCVTELGFVGALVNGFSQSATVDGGSTPLYYDLPRYRPFWAEVERLDVPFYLHPRNPLNQDARIYEGHPWLLGPTWAFAQETAVHALRLMASGLFDEHPGLRIVLGHMGEGIPAMLWRIDHRNAWVDVPPAYPAKRRMVDYFTENFFVTTSGNFRTQTLIDLLLELGSERVMFSTDWPFENINHAAEWFDAASISEADRLKIGRTNAATLFKLDR</sequence>
<comment type="function">
    <text evidence="2">Involved in the gamma-resorcylate (2,6-dihydroxybenzoate) catabolism (PubMed:26319878). Catalyzes the reversible decarboxylation of gamma-resorcylate to resorcinol (PubMed:26319878).</text>
</comment>
<comment type="catalytic activity">
    <reaction evidence="2">
        <text>2,6-dihydroxybenzoate + H(+) = resorcinol + CO2</text>
        <dbReference type="Rhea" id="RHEA:49464"/>
        <dbReference type="ChEBI" id="CHEBI:15378"/>
        <dbReference type="ChEBI" id="CHEBI:16526"/>
        <dbReference type="ChEBI" id="CHEBI:27810"/>
        <dbReference type="ChEBI" id="CHEBI:131450"/>
        <dbReference type="EC" id="4.1.1.103"/>
    </reaction>
    <physiologicalReaction direction="left-to-right" evidence="2">
        <dbReference type="Rhea" id="RHEA:49465"/>
    </physiologicalReaction>
</comment>
<comment type="cofactor">
    <cofactor evidence="1">
        <name>Zn(2+)</name>
        <dbReference type="ChEBI" id="CHEBI:29105"/>
    </cofactor>
    <text evidence="1">Binds 1 Zn(2+) ion per subunit.</text>
</comment>
<comment type="pathway">
    <text evidence="4">Aromatic compound metabolism.</text>
</comment>
<comment type="induction">
    <text evidence="2">Induced in the presence of gamma-resorcylate.</text>
</comment>
<comment type="disruption phenotype">
    <text evidence="2">The mutant is unable to grow on gamma-resorcylate as a sole energy and carbon source.</text>
</comment>
<comment type="similarity">
    <text evidence="4">Belongs to the metallo-dependent hydrolases superfamily. ACMSD family.</text>
</comment>
<name>GRDC_RHOJR</name>
<protein>
    <recommendedName>
        <fullName evidence="3">Gamma-resorcylate decarboxylase</fullName>
        <shortName evidence="3">GRA decarboxylase</shortName>
        <ecNumber evidence="2">4.1.1.103</ecNumber>
    </recommendedName>
    <alternativeName>
        <fullName evidence="4">2,6-dihydroxybenzoate decarboxylase</fullName>
    </alternativeName>
</protein>